<organism>
    <name type="scientific">Calycanthus floridus var. glaucus</name>
    <name type="common">Eastern sweetshrub</name>
    <name type="synonym">Calycanthus fertilis var. ferax</name>
    <dbReference type="NCBI Taxonomy" id="212734"/>
    <lineage>
        <taxon>Eukaryota</taxon>
        <taxon>Viridiplantae</taxon>
        <taxon>Streptophyta</taxon>
        <taxon>Embryophyta</taxon>
        <taxon>Tracheophyta</taxon>
        <taxon>Spermatophyta</taxon>
        <taxon>Magnoliopsida</taxon>
        <taxon>Magnoliidae</taxon>
        <taxon>Laurales</taxon>
        <taxon>Calycanthaceae</taxon>
        <taxon>Calycanthus</taxon>
    </lineage>
</organism>
<feature type="chain" id="PRO_0000353736" description="Cytochrome c biogenesis protein CcsA">
    <location>
        <begin position="1"/>
        <end position="323"/>
    </location>
</feature>
<feature type="transmembrane region" description="Helical" evidence="1">
    <location>
        <begin position="9"/>
        <end position="29"/>
    </location>
</feature>
<feature type="transmembrane region" description="Helical" evidence="1">
    <location>
        <begin position="45"/>
        <end position="62"/>
    </location>
</feature>
<feature type="transmembrane region" description="Helical" evidence="1">
    <location>
        <begin position="71"/>
        <end position="91"/>
    </location>
</feature>
<feature type="transmembrane region" description="Helical" evidence="1">
    <location>
        <begin position="98"/>
        <end position="118"/>
    </location>
</feature>
<feature type="transmembrane region" description="Helical" evidence="1">
    <location>
        <begin position="143"/>
        <end position="163"/>
    </location>
</feature>
<feature type="transmembrane region" description="Helical" evidence="1">
    <location>
        <begin position="227"/>
        <end position="247"/>
    </location>
</feature>
<feature type="transmembrane region" description="Helical" evidence="1">
    <location>
        <begin position="261"/>
        <end position="275"/>
    </location>
</feature>
<feature type="transmembrane region" description="Helical" evidence="1">
    <location>
        <begin position="285"/>
        <end position="305"/>
    </location>
</feature>
<geneLocation type="chloroplast"/>
<keyword id="KW-0150">Chloroplast</keyword>
<keyword id="KW-0201">Cytochrome c-type biogenesis</keyword>
<keyword id="KW-0472">Membrane</keyword>
<keyword id="KW-0934">Plastid</keyword>
<keyword id="KW-0793">Thylakoid</keyword>
<keyword id="KW-0812">Transmembrane</keyword>
<keyword id="KW-1133">Transmembrane helix</keyword>
<gene>
    <name evidence="1" type="primary">ccsA</name>
</gene>
<proteinExistence type="inferred from homology"/>
<evidence type="ECO:0000255" key="1">
    <source>
        <dbReference type="HAMAP-Rule" id="MF_01391"/>
    </source>
</evidence>
<name>CCSA_CALFG</name>
<comment type="function">
    <text evidence="1">Required during biogenesis of c-type cytochromes (cytochrome c6 and cytochrome f) at the step of heme attachment.</text>
</comment>
<comment type="subunit">
    <text evidence="1">May interact with Ccs1.</text>
</comment>
<comment type="subcellular location">
    <subcellularLocation>
        <location evidence="1">Plastid</location>
        <location evidence="1">Chloroplast thylakoid membrane</location>
        <topology evidence="1">Multi-pass membrane protein</topology>
    </subcellularLocation>
</comment>
<comment type="similarity">
    <text evidence="1">Belongs to the CcmF/CycK/Ccl1/NrfE/CcsA family.</text>
</comment>
<dbReference type="EMBL" id="AJ428413">
    <property type="protein sequence ID" value="CAD28771.1"/>
    <property type="molecule type" value="Genomic_DNA"/>
</dbReference>
<dbReference type="RefSeq" id="NP_862804.1">
    <property type="nucleotide sequence ID" value="NC_004993.1"/>
</dbReference>
<dbReference type="SMR" id="Q7YJT4"/>
<dbReference type="GeneID" id="2598093"/>
<dbReference type="GO" id="GO:0009535">
    <property type="term" value="C:chloroplast thylakoid membrane"/>
    <property type="evidence" value="ECO:0007669"/>
    <property type="project" value="UniProtKB-SubCell"/>
</dbReference>
<dbReference type="GO" id="GO:0005886">
    <property type="term" value="C:plasma membrane"/>
    <property type="evidence" value="ECO:0007669"/>
    <property type="project" value="TreeGrafter"/>
</dbReference>
<dbReference type="GO" id="GO:0020037">
    <property type="term" value="F:heme binding"/>
    <property type="evidence" value="ECO:0007669"/>
    <property type="project" value="InterPro"/>
</dbReference>
<dbReference type="GO" id="GO:0017004">
    <property type="term" value="P:cytochrome complex assembly"/>
    <property type="evidence" value="ECO:0007669"/>
    <property type="project" value="UniProtKB-UniRule"/>
</dbReference>
<dbReference type="HAMAP" id="MF_01391">
    <property type="entry name" value="CytC_CcsA"/>
    <property type="match status" value="1"/>
</dbReference>
<dbReference type="InterPro" id="IPR002541">
    <property type="entry name" value="Cyt_c_assembly"/>
</dbReference>
<dbReference type="InterPro" id="IPR017562">
    <property type="entry name" value="Cyt_c_biogenesis_CcsA"/>
</dbReference>
<dbReference type="InterPro" id="IPR045062">
    <property type="entry name" value="Cyt_c_biogenesis_CcsA/CcmC"/>
</dbReference>
<dbReference type="NCBIfam" id="TIGR03144">
    <property type="entry name" value="cytochr_II_ccsB"/>
    <property type="match status" value="1"/>
</dbReference>
<dbReference type="PANTHER" id="PTHR30071:SF1">
    <property type="entry name" value="CYTOCHROME B_B6 PROTEIN-RELATED"/>
    <property type="match status" value="1"/>
</dbReference>
<dbReference type="PANTHER" id="PTHR30071">
    <property type="entry name" value="HEME EXPORTER PROTEIN C"/>
    <property type="match status" value="1"/>
</dbReference>
<dbReference type="Pfam" id="PF01578">
    <property type="entry name" value="Cytochrom_C_asm"/>
    <property type="match status" value="1"/>
</dbReference>
<reference key="1">
    <citation type="journal article" date="2003" name="Plant Syst. Evol.">
        <title>The chloroplast genome of the 'basal' angiosperm Calycanthus fertilis -- structural and phylogenetic analyses.</title>
        <authorList>
            <person name="Goremykin V."/>
            <person name="Hirsch-Ernst K.I."/>
            <person name="Woelfl S."/>
            <person name="Hellwig F.H."/>
        </authorList>
    </citation>
    <scope>NUCLEOTIDE SEQUENCE [LARGE SCALE GENOMIC DNA]</scope>
</reference>
<accession>Q7YJT4</accession>
<protein>
    <recommendedName>
        <fullName evidence="1">Cytochrome c biogenesis protein CcsA</fullName>
    </recommendedName>
</protein>
<sequence length="323" mass="36824">MIFSTLEHILTHISFSIISIVITIHLLNLLVHDTVGLCDSSEKGMMATFFCITGLLVTRWIYSRHFPLSDLYESLMFLSWSFSIIHMVPYFRNHKNSLSAITAPSAIFTQGFATSGLLTEMHQSAILVPALQSQWLMMHVSMMLLGYASLLCGSLLSVALLVITFRKTLGIPGKNNHFLIGSFPFGEIRYFNEKRKRSVLKKTSFFSFRNYHRYQLTQRLDHCSYRIISLGFTFSTIGILSGAVWANEAWGSYWNWDPKETWAFITWTIFAIYLHTRTNQRFQDVGPAIVASMGFLIIWICYFGVNLLGIGLHSYGSFALTSN</sequence>